<accession>P47790</accession>
<protein>
    <recommendedName>
        <fullName>Myelin proteolipid protein</fullName>
        <shortName>PLP</shortName>
    </recommendedName>
    <alternativeName>
        <fullName>Lipophilin</fullName>
    </alternativeName>
</protein>
<reference key="1">
    <citation type="journal article" date="1994" name="Neurochem. Res.">
        <title>Isolation and characterization of a cDNA encoding the zebra finch myelin proteolipid protein.</title>
        <authorList>
            <person name="Campagnoni C.W."/>
            <person name="Kampf K."/>
            <person name="Mason B."/>
            <person name="Handley V.W."/>
            <person name="Campagnoni A.T."/>
        </authorList>
    </citation>
    <scope>NUCLEOTIDE SEQUENCE [MRNA]</scope>
</reference>
<gene>
    <name type="primary">PLP1</name>
    <name type="synonym">PLP</name>
</gene>
<organism>
    <name type="scientific">Taeniopygia guttata</name>
    <name type="common">Zebra finch</name>
    <name type="synonym">Poephila guttata</name>
    <dbReference type="NCBI Taxonomy" id="59729"/>
    <lineage>
        <taxon>Eukaryota</taxon>
        <taxon>Metazoa</taxon>
        <taxon>Chordata</taxon>
        <taxon>Craniata</taxon>
        <taxon>Vertebrata</taxon>
        <taxon>Euteleostomi</taxon>
        <taxon>Archelosauria</taxon>
        <taxon>Archosauria</taxon>
        <taxon>Dinosauria</taxon>
        <taxon>Saurischia</taxon>
        <taxon>Theropoda</taxon>
        <taxon>Coelurosauria</taxon>
        <taxon>Aves</taxon>
        <taxon>Neognathae</taxon>
        <taxon>Neoaves</taxon>
        <taxon>Telluraves</taxon>
        <taxon>Australaves</taxon>
        <taxon>Passeriformes</taxon>
        <taxon>Passeroidea</taxon>
        <taxon>Estrildidae</taxon>
        <taxon>Estrildinae</taxon>
        <taxon>Taeniopygia</taxon>
    </lineage>
</organism>
<feature type="initiator methionine" description="Removed" evidence="1">
    <location>
        <position position="1"/>
    </location>
</feature>
<feature type="chain" id="PRO_0000159011" description="Myelin proteolipid protein">
    <location>
        <begin position="2"/>
        <end position="277"/>
    </location>
</feature>
<feature type="topological domain" description="Cytoplasmic" evidence="2">
    <location>
        <begin position="2"/>
        <end position="10"/>
    </location>
</feature>
<feature type="transmembrane region" description="Helical; Name=1" evidence="2">
    <location>
        <begin position="11"/>
        <end position="36"/>
    </location>
</feature>
<feature type="topological domain" description="Extracellular" evidence="2">
    <location>
        <begin position="37"/>
        <end position="59"/>
    </location>
</feature>
<feature type="transmembrane region" description="Helical; Name=2" evidence="2">
    <location>
        <begin position="60"/>
        <end position="88"/>
    </location>
</feature>
<feature type="topological domain" description="Cytoplasmic" evidence="2">
    <location>
        <begin position="89"/>
        <end position="151"/>
    </location>
</feature>
<feature type="transmembrane region" description="Helical; Name=3" evidence="2">
    <location>
        <begin position="152"/>
        <end position="178"/>
    </location>
</feature>
<feature type="topological domain" description="Extracellular" evidence="2">
    <location>
        <begin position="179"/>
        <end position="238"/>
    </location>
</feature>
<feature type="transmembrane region" description="Helical; Name=4" evidence="2">
    <location>
        <begin position="239"/>
        <end position="268"/>
    </location>
</feature>
<feature type="topological domain" description="Cytoplasmic" evidence="2">
    <location>
        <begin position="269"/>
        <end position="277"/>
    </location>
</feature>
<feature type="lipid moiety-binding region" description="S-palmitoyl cysteine" evidence="1">
    <location>
        <position position="6"/>
    </location>
</feature>
<feature type="lipid moiety-binding region" description="S-palmitoyl cysteine" evidence="1">
    <location>
        <position position="7"/>
    </location>
</feature>
<feature type="lipid moiety-binding region" description="S-palmitoyl cysteine" evidence="1">
    <location>
        <position position="10"/>
    </location>
</feature>
<feature type="lipid moiety-binding region" description="S-palmitoyl cysteine" evidence="1">
    <location>
        <position position="109"/>
    </location>
</feature>
<feature type="lipid moiety-binding region" description="S-palmitoyl cysteine" evidence="1">
    <location>
        <position position="139"/>
    </location>
</feature>
<feature type="lipid moiety-binding region" description="S-palmitoyl cysteine" evidence="1">
    <location>
        <position position="141"/>
    </location>
</feature>
<feature type="lipid moiety-binding region" description="O-palmitoyl threonine" evidence="1">
    <location>
        <position position="199"/>
    </location>
</feature>
<feature type="disulfide bond" evidence="1">
    <location>
        <begin position="184"/>
        <end position="228"/>
    </location>
</feature>
<feature type="disulfide bond" evidence="1">
    <location>
        <begin position="201"/>
        <end position="220"/>
    </location>
</feature>
<keyword id="KW-1003">Cell membrane</keyword>
<keyword id="KW-1015">Disulfide bond</keyword>
<keyword id="KW-0449">Lipoprotein</keyword>
<keyword id="KW-0472">Membrane</keyword>
<keyword id="KW-0564">Palmitate</keyword>
<keyword id="KW-1185">Reference proteome</keyword>
<keyword id="KW-0812">Transmembrane</keyword>
<keyword id="KW-1133">Transmembrane helix</keyword>
<evidence type="ECO:0000250" key="1"/>
<evidence type="ECO:0000255" key="2"/>
<evidence type="ECO:0000305" key="3"/>
<sequence length="277" mass="30228">MGLLECCARCLIGAPFASLVATGLCFFGVALFCGCGHEALTGTEQLIETYFSKNYQDYEFLIDVIHGFQYFIYGTAAFFFLYGALLLAEGFYTTGAVRQIFGDYRTTICGKGLSATVTGGPKGRGARGPQRAHSWQRVCHCLGKWLGHPDKFVGITYVLTIIWLLVFACSAVPVYIYFNTWTTCQSIGNPTKTSASIGTLCADARMYGILPWNAFPGKVCGSNLLSICKTSEFQMTFHLFIAAFVGAAATLVSLVTFIIATTYNFAVLRLMGRGTKF</sequence>
<proteinExistence type="evidence at transcript level"/>
<comment type="function">
    <text>This is the major myelin protein from the central nervous system. It plays an important role in the formation or maintenance of the multilamellar structure of myelin.</text>
</comment>
<comment type="subcellular location">
    <subcellularLocation>
        <location evidence="1">Cell membrane</location>
        <topology evidence="1">Multi-pass membrane protein</topology>
    </subcellularLocation>
</comment>
<comment type="similarity">
    <text evidence="3">Belongs to the myelin proteolipid protein family.</text>
</comment>
<name>MYPR_TAEGU</name>
<dbReference type="EMBL" id="S75729">
    <property type="protein sequence ID" value="AAB32825.2"/>
    <property type="molecule type" value="mRNA"/>
</dbReference>
<dbReference type="PIR" id="I51270">
    <property type="entry name" value="I51270"/>
</dbReference>
<dbReference type="RefSeq" id="NP_001070171.1">
    <property type="nucleotide sequence ID" value="NM_001076703.1"/>
</dbReference>
<dbReference type="FunCoup" id="P47790">
    <property type="interactions" value="17"/>
</dbReference>
<dbReference type="STRING" id="59729.ENSTGUP00000028740"/>
<dbReference type="Ensembl" id="ENSTGUT00000025770.1">
    <property type="protein sequence ID" value="ENSTGUP00000028740.1"/>
    <property type="gene ID" value="ENSTGUG00000006519.2"/>
</dbReference>
<dbReference type="GeneID" id="100220245"/>
<dbReference type="KEGG" id="tgu:100220245"/>
<dbReference type="CTD" id="5354"/>
<dbReference type="GeneTree" id="ENSGT00390000006915"/>
<dbReference type="InParanoid" id="P47790"/>
<dbReference type="OMA" id="AVCKTRE"/>
<dbReference type="OrthoDB" id="9993736at2759"/>
<dbReference type="Proteomes" id="UP000007754">
    <property type="component" value="Chromosome 4A"/>
</dbReference>
<dbReference type="GO" id="GO:0043209">
    <property type="term" value="C:myelin sheath"/>
    <property type="evidence" value="ECO:0007669"/>
    <property type="project" value="TreeGrafter"/>
</dbReference>
<dbReference type="GO" id="GO:0005886">
    <property type="term" value="C:plasma membrane"/>
    <property type="evidence" value="ECO:0000250"/>
    <property type="project" value="UniProtKB"/>
</dbReference>
<dbReference type="GO" id="GO:0019911">
    <property type="term" value="F:structural constituent of myelin sheath"/>
    <property type="evidence" value="ECO:0007669"/>
    <property type="project" value="TreeGrafter"/>
</dbReference>
<dbReference type="GO" id="GO:0061564">
    <property type="term" value="P:axon development"/>
    <property type="evidence" value="ECO:0007669"/>
    <property type="project" value="TreeGrafter"/>
</dbReference>
<dbReference type="GO" id="GO:0022010">
    <property type="term" value="P:central nervous system myelination"/>
    <property type="evidence" value="ECO:0007669"/>
    <property type="project" value="TreeGrafter"/>
</dbReference>
<dbReference type="InterPro" id="IPR001614">
    <property type="entry name" value="Myelin_PLP"/>
</dbReference>
<dbReference type="InterPro" id="IPR018237">
    <property type="entry name" value="Myelin_PLP_CS"/>
</dbReference>
<dbReference type="PANTHER" id="PTHR11683">
    <property type="entry name" value="MYELIN PROTEOLIPID"/>
    <property type="match status" value="1"/>
</dbReference>
<dbReference type="PANTHER" id="PTHR11683:SF11">
    <property type="entry name" value="MYELIN PROTEOLIPID PROTEIN"/>
    <property type="match status" value="1"/>
</dbReference>
<dbReference type="Pfam" id="PF01275">
    <property type="entry name" value="Myelin_PLP"/>
    <property type="match status" value="2"/>
</dbReference>
<dbReference type="PRINTS" id="PR00214">
    <property type="entry name" value="MYELINPLP"/>
</dbReference>
<dbReference type="SMART" id="SM00002">
    <property type="entry name" value="PLP"/>
    <property type="match status" value="1"/>
</dbReference>
<dbReference type="PROSITE" id="PS00575">
    <property type="entry name" value="MYELIN_PLP_1"/>
    <property type="match status" value="1"/>
</dbReference>
<dbReference type="PROSITE" id="PS01004">
    <property type="entry name" value="MYELIN_PLP_2"/>
    <property type="match status" value="1"/>
</dbReference>